<keyword id="KW-0342">GTP-binding</keyword>
<keyword id="KW-0547">Nucleotide-binding</keyword>
<keyword id="KW-0677">Repeat</keyword>
<keyword id="KW-0853">WD repeat</keyword>
<dbReference type="EMBL" id="L28125">
    <property type="protein sequence ID" value="AAA85775.1"/>
    <property type="molecule type" value="Genomic_DNA"/>
</dbReference>
<dbReference type="PIR" id="T18521">
    <property type="entry name" value="T18521"/>
</dbReference>
<dbReference type="SMR" id="Q00808"/>
<dbReference type="VEuPathDB" id="FungiDB:PODANS_7_3110"/>
<dbReference type="GO" id="GO:0005525">
    <property type="term" value="F:GTP binding"/>
    <property type="evidence" value="ECO:0007669"/>
    <property type="project" value="UniProtKB-KW"/>
</dbReference>
<dbReference type="CDD" id="cd00200">
    <property type="entry name" value="WD40"/>
    <property type="match status" value="1"/>
</dbReference>
<dbReference type="FunFam" id="2.130.10.10:FF:000228">
    <property type="entry name" value="COMPASS-like H3K4 histone methylase component WDR5A"/>
    <property type="match status" value="1"/>
</dbReference>
<dbReference type="FunFam" id="3.40.50.300:FF:001638">
    <property type="entry name" value="NACHT and WD40 domain protein"/>
    <property type="match status" value="1"/>
</dbReference>
<dbReference type="Gene3D" id="3.40.50.300">
    <property type="entry name" value="P-loop containing nucleotide triphosphate hydrolases"/>
    <property type="match status" value="1"/>
</dbReference>
<dbReference type="Gene3D" id="2.130.10.10">
    <property type="entry name" value="YVTN repeat-like/Quinoprotein amine dehydrogenase"/>
    <property type="match status" value="5"/>
</dbReference>
<dbReference type="InterPro" id="IPR020472">
    <property type="entry name" value="G-protein_beta_WD-40_rep"/>
</dbReference>
<dbReference type="InterPro" id="IPR054471">
    <property type="entry name" value="GPIID_WHD"/>
</dbReference>
<dbReference type="InterPro" id="IPR010730">
    <property type="entry name" value="HET"/>
</dbReference>
<dbReference type="InterPro" id="IPR007111">
    <property type="entry name" value="NACHT_NTPase"/>
</dbReference>
<dbReference type="InterPro" id="IPR056884">
    <property type="entry name" value="NPHP3-like_N"/>
</dbReference>
<dbReference type="InterPro" id="IPR027417">
    <property type="entry name" value="P-loop_NTPase"/>
</dbReference>
<dbReference type="InterPro" id="IPR015943">
    <property type="entry name" value="WD40/YVTN_repeat-like_dom_sf"/>
</dbReference>
<dbReference type="InterPro" id="IPR019775">
    <property type="entry name" value="WD40_repeat_CS"/>
</dbReference>
<dbReference type="InterPro" id="IPR036322">
    <property type="entry name" value="WD40_repeat_dom_sf"/>
</dbReference>
<dbReference type="InterPro" id="IPR001680">
    <property type="entry name" value="WD40_rpt"/>
</dbReference>
<dbReference type="PANTHER" id="PTHR19848:SF8">
    <property type="entry name" value="F-BOX AND WD REPEAT DOMAIN CONTAINING 7"/>
    <property type="match status" value="1"/>
</dbReference>
<dbReference type="PANTHER" id="PTHR19848">
    <property type="entry name" value="WD40 REPEAT PROTEIN"/>
    <property type="match status" value="1"/>
</dbReference>
<dbReference type="Pfam" id="PF25173">
    <property type="entry name" value="Beta-prop_WDR3_1st"/>
    <property type="match status" value="1"/>
</dbReference>
<dbReference type="Pfam" id="PF22939">
    <property type="entry name" value="GPIID_WHD"/>
    <property type="match status" value="1"/>
</dbReference>
<dbReference type="Pfam" id="PF06985">
    <property type="entry name" value="HET"/>
    <property type="match status" value="1"/>
</dbReference>
<dbReference type="Pfam" id="PF24883">
    <property type="entry name" value="NPHP3_N"/>
    <property type="match status" value="1"/>
</dbReference>
<dbReference type="Pfam" id="PF00400">
    <property type="entry name" value="WD40"/>
    <property type="match status" value="6"/>
</dbReference>
<dbReference type="PRINTS" id="PR00320">
    <property type="entry name" value="GPROTEINBRPT"/>
</dbReference>
<dbReference type="SMART" id="SM00320">
    <property type="entry name" value="WD40"/>
    <property type="match status" value="10"/>
</dbReference>
<dbReference type="SUPFAM" id="SSF52540">
    <property type="entry name" value="P-loop containing nucleoside triphosphate hydrolases"/>
    <property type="match status" value="1"/>
</dbReference>
<dbReference type="SUPFAM" id="SSF50978">
    <property type="entry name" value="WD40 repeat-like"/>
    <property type="match status" value="2"/>
</dbReference>
<dbReference type="PROSITE" id="PS50837">
    <property type="entry name" value="NACHT"/>
    <property type="match status" value="1"/>
</dbReference>
<dbReference type="PROSITE" id="PS00678">
    <property type="entry name" value="WD_REPEATS_1"/>
    <property type="match status" value="10"/>
</dbReference>
<dbReference type="PROSITE" id="PS50082">
    <property type="entry name" value="WD_REPEATS_2"/>
    <property type="match status" value="10"/>
</dbReference>
<dbReference type="PROSITE" id="PS50294">
    <property type="entry name" value="WD_REPEATS_REGION"/>
    <property type="match status" value="1"/>
</dbReference>
<feature type="chain" id="PRO_0000051015" description="Vegetative incompatibility protein HET-E-1">
    <location>
        <begin position="1"/>
        <end position="1356"/>
    </location>
</feature>
<feature type="domain" description="NACHT" evidence="2">
    <location>
        <begin position="294"/>
        <end position="629"/>
    </location>
</feature>
<feature type="repeat" description="WD 1">
    <location>
        <begin position="839"/>
        <end position="869"/>
    </location>
</feature>
<feature type="repeat" description="WD 2">
    <location>
        <begin position="881"/>
        <end position="911"/>
    </location>
</feature>
<feature type="repeat" description="WD 3">
    <location>
        <begin position="923"/>
        <end position="953"/>
    </location>
</feature>
<feature type="repeat" description="WD 4">
    <location>
        <begin position="965"/>
        <end position="995"/>
    </location>
</feature>
<feature type="repeat" description="WD 5">
    <location>
        <begin position="1007"/>
        <end position="1037"/>
    </location>
</feature>
<feature type="repeat" description="WD 6">
    <location>
        <begin position="1049"/>
        <end position="1079"/>
    </location>
</feature>
<feature type="repeat" description="WD 7">
    <location>
        <begin position="1091"/>
        <end position="1121"/>
    </location>
</feature>
<feature type="repeat" description="WD 8">
    <location>
        <begin position="1133"/>
        <end position="1163"/>
    </location>
</feature>
<feature type="repeat" description="WD 9">
    <location>
        <begin position="1175"/>
        <end position="1205"/>
    </location>
</feature>
<feature type="repeat" description="WD 10">
    <location>
        <begin position="1217"/>
        <end position="1247"/>
    </location>
</feature>
<feature type="binding site" evidence="1">
    <location>
        <begin position="300"/>
        <end position="307"/>
    </location>
    <ligand>
        <name>GTP</name>
        <dbReference type="ChEBI" id="CHEBI:37565"/>
    </ligand>
</feature>
<evidence type="ECO:0000255" key="1"/>
<evidence type="ECO:0000255" key="2">
    <source>
        <dbReference type="PROSITE-ProRule" id="PRU00136"/>
    </source>
</evidence>
<protein>
    <recommendedName>
        <fullName>Vegetative incompatibility protein HET-E-1</fullName>
    </recommendedName>
</protein>
<gene>
    <name type="primary">HET-E1</name>
</gene>
<proteinExistence type="predicted"/>
<accession>Q00808</accession>
<sequence length="1356" mass="149766">MRLLERDDAGEIRPTKDLPSGKIPPYAILSHTWGPDEEEVSYKDLKDGRAVSKLGYNKIRFCADQAWRDGRKFFWVDTCCIDKSNSTELQEAINSMFRWYRDAAKCYVYLTDVSTDKRDADGDPSWKWAFQKCKWFTRGWTLQELIAPTSVEFFSREKARIGDRNSLERMIHDVTGIPLEALRGSPLSDFSVHDRMAWMKQRNTTREEDMAYSLFGIFDVHLPLIYGEGKEKALERLREKIGKDDGCLADLRVTDPRHDKKRIEAAKGGLLKDSYCWVLSNVQFQQWHDGDDQRLLWINGDPGKGKTMLLCGIIDELKKSTPPGLLSFFFCQATDSRINNATAVLRGLIYLLVSQQPALISHVRRPYDHAGKKMFEGPNVWIVLCEIFTSILQDPGLRMTYLIIDALDECVTDLPQLLELITRTSCTSSPIKWIVSSRNWPDIEEQLETATQKARLSLELNAESISTAVNAFIQNRIDQLAPKTKHDANMIGKIRDYLHSHANGTFLWVALVCQALADPKVKKRHILAKLQTFPRGLDSLYARMLEQIGHSEDAELCKQILAVAAAVRRPISLDELASLVEMPDDVSDDPESLEEIVKLCGSFLIIRERTVYFVHQSAKDFLLGTASDKASNKASQEAFELVFPTGIEDVSYIIFWRSLNVMSQKLRRDIYCLNAPGFLIDNVRVPDPDPLATVRYSCIYWIDHLRDLVSSTSSKWVHLLQDDGDIHRFLTTKYLYWLEALSLLRALPEGINAIRQLESLLGHTIRGRLIAIVRDGYRFALSYRMIIEKAPLQAYTSALVFAPTDSMIKKIFKKEEPGWISTISVVEAEWNACTQTLEGHGSSVLSVAFSADGQRVASGSDDKTIKIWDTASGTGTQTLEGHGGSVWSVAFSPDRERVASGSDDKTIKIWDAASGTCTQTLEGHGGRVQSVAFSPDGQRVASGSDDHTIKIWDAASGTCTQTLEGHGSSVLSVAFSPDGQRVASGSGDKTIKIWDTASGTCTQTLEGHGGSVWSVAFSPDGQRVASGSDDKTIKIWDTASGTCTQTLEGHGGWVQSVVFSPDGQRVASGSDDHTIKIWDAVSGTCTQTLEGHGDSVWSVAFSPDGQRVASGSIDGTIKIWDAASGTCTQTLEGHGGWVHSVAFSPDGQRVASGSIDGTIKIWDAASGTCTQTLEGHGGWVQSVAFSPDGQRVASGSSDKTIKIWDTASGTCTQTLEGHGGWVQSVAFSPDGQRVASGSSDNTIKIWDTASGTCTQTLNVGSTATCLSFDYTNAYINTNIGRIQIATATMESLNQLSSPVCYSYGLGQDHRWITCNNQNVLWLPPEYHTSAFTMQGRKIVLGSYSGRIIIFLFSRDV</sequence>
<comment type="function">
    <text>Responsible for vegetative incompatibility through specific interactions with different alleles of the unlinked gene, het-c.</text>
</comment>
<reference key="1">
    <citation type="journal article" date="1995" name="Gene">
        <title>A gene responsible for vegetative incompatibility in the fungus Podospora anserina encodes a protein with a GTP-binding motif and G beta homologous domain.</title>
        <authorList>
            <person name="Saupe S."/>
            <person name="Turcq B."/>
            <person name="Begueret J."/>
        </authorList>
    </citation>
    <scope>NUCLEOTIDE SEQUENCE [GENOMIC DNA]</scope>
</reference>
<organism>
    <name type="scientific">Podospora anserina</name>
    <name type="common">Pleurage anserina</name>
    <dbReference type="NCBI Taxonomy" id="2587412"/>
    <lineage>
        <taxon>Eukaryota</taxon>
        <taxon>Fungi</taxon>
        <taxon>Dikarya</taxon>
        <taxon>Ascomycota</taxon>
        <taxon>Pezizomycotina</taxon>
        <taxon>Sordariomycetes</taxon>
        <taxon>Sordariomycetidae</taxon>
        <taxon>Sordariales</taxon>
        <taxon>Podosporaceae</taxon>
        <taxon>Podospora</taxon>
    </lineage>
</organism>
<name>HETE1_PODAS</name>